<evidence type="ECO:0000255" key="1">
    <source>
        <dbReference type="HAMAP-Rule" id="MF_00037"/>
    </source>
</evidence>
<reference key="1">
    <citation type="submission" date="2005-08" db="EMBL/GenBank/DDBJ databases">
        <title>Complete sequence of chromosome 1 of Nitrosospira multiformis ATCC 25196.</title>
        <authorList>
            <person name="Copeland A."/>
            <person name="Lucas S."/>
            <person name="Lapidus A."/>
            <person name="Barry K."/>
            <person name="Detter J.C."/>
            <person name="Glavina T."/>
            <person name="Hammon N."/>
            <person name="Israni S."/>
            <person name="Pitluck S."/>
            <person name="Chain P."/>
            <person name="Malfatti S."/>
            <person name="Shin M."/>
            <person name="Vergez L."/>
            <person name="Schmutz J."/>
            <person name="Larimer F."/>
            <person name="Land M."/>
            <person name="Hauser L."/>
            <person name="Kyrpides N."/>
            <person name="Lykidis A."/>
            <person name="Richardson P."/>
        </authorList>
    </citation>
    <scope>NUCLEOTIDE SEQUENCE [LARGE SCALE GENOMIC DNA]</scope>
    <source>
        <strain>ATCC 25196 / NCIMB 11849 / C 71</strain>
    </source>
</reference>
<dbReference type="EC" id="1.3.1.98" evidence="1"/>
<dbReference type="EMBL" id="CP000103">
    <property type="protein sequence ID" value="ABB75781.1"/>
    <property type="molecule type" value="Genomic_DNA"/>
</dbReference>
<dbReference type="RefSeq" id="WP_011381780.1">
    <property type="nucleotide sequence ID" value="NC_007614.1"/>
</dbReference>
<dbReference type="SMR" id="Q2Y640"/>
<dbReference type="STRING" id="323848.Nmul_A2492"/>
<dbReference type="KEGG" id="nmu:Nmul_A2492"/>
<dbReference type="eggNOG" id="COG0812">
    <property type="taxonomic scope" value="Bacteria"/>
</dbReference>
<dbReference type="HOGENOM" id="CLU_035304_1_1_4"/>
<dbReference type="OrthoDB" id="9804753at2"/>
<dbReference type="UniPathway" id="UPA00219"/>
<dbReference type="Proteomes" id="UP000002718">
    <property type="component" value="Chromosome"/>
</dbReference>
<dbReference type="GO" id="GO:0005829">
    <property type="term" value="C:cytosol"/>
    <property type="evidence" value="ECO:0007669"/>
    <property type="project" value="TreeGrafter"/>
</dbReference>
<dbReference type="GO" id="GO:0071949">
    <property type="term" value="F:FAD binding"/>
    <property type="evidence" value="ECO:0007669"/>
    <property type="project" value="InterPro"/>
</dbReference>
<dbReference type="GO" id="GO:0008762">
    <property type="term" value="F:UDP-N-acetylmuramate dehydrogenase activity"/>
    <property type="evidence" value="ECO:0007669"/>
    <property type="project" value="UniProtKB-UniRule"/>
</dbReference>
<dbReference type="GO" id="GO:0051301">
    <property type="term" value="P:cell division"/>
    <property type="evidence" value="ECO:0007669"/>
    <property type="project" value="UniProtKB-KW"/>
</dbReference>
<dbReference type="GO" id="GO:0071555">
    <property type="term" value="P:cell wall organization"/>
    <property type="evidence" value="ECO:0007669"/>
    <property type="project" value="UniProtKB-KW"/>
</dbReference>
<dbReference type="GO" id="GO:0009252">
    <property type="term" value="P:peptidoglycan biosynthetic process"/>
    <property type="evidence" value="ECO:0007669"/>
    <property type="project" value="UniProtKB-UniRule"/>
</dbReference>
<dbReference type="GO" id="GO:0008360">
    <property type="term" value="P:regulation of cell shape"/>
    <property type="evidence" value="ECO:0007669"/>
    <property type="project" value="UniProtKB-KW"/>
</dbReference>
<dbReference type="Gene3D" id="3.30.465.10">
    <property type="match status" value="1"/>
</dbReference>
<dbReference type="Gene3D" id="3.90.78.10">
    <property type="entry name" value="UDP-N-acetylenolpyruvoylglucosamine reductase, C-terminal domain"/>
    <property type="match status" value="1"/>
</dbReference>
<dbReference type="Gene3D" id="3.30.43.10">
    <property type="entry name" value="Uridine Diphospho-n-acetylenolpyruvylglucosamine Reductase, domain 2"/>
    <property type="match status" value="1"/>
</dbReference>
<dbReference type="HAMAP" id="MF_00037">
    <property type="entry name" value="MurB"/>
    <property type="match status" value="1"/>
</dbReference>
<dbReference type="InterPro" id="IPR016166">
    <property type="entry name" value="FAD-bd_PCMH"/>
</dbReference>
<dbReference type="InterPro" id="IPR036318">
    <property type="entry name" value="FAD-bd_PCMH-like_sf"/>
</dbReference>
<dbReference type="InterPro" id="IPR016167">
    <property type="entry name" value="FAD-bd_PCMH_sub1"/>
</dbReference>
<dbReference type="InterPro" id="IPR016169">
    <property type="entry name" value="FAD-bd_PCMH_sub2"/>
</dbReference>
<dbReference type="InterPro" id="IPR003170">
    <property type="entry name" value="MurB"/>
</dbReference>
<dbReference type="InterPro" id="IPR011601">
    <property type="entry name" value="MurB_C"/>
</dbReference>
<dbReference type="InterPro" id="IPR036635">
    <property type="entry name" value="MurB_C_sf"/>
</dbReference>
<dbReference type="InterPro" id="IPR006094">
    <property type="entry name" value="Oxid_FAD_bind_N"/>
</dbReference>
<dbReference type="NCBIfam" id="TIGR00179">
    <property type="entry name" value="murB"/>
    <property type="match status" value="1"/>
</dbReference>
<dbReference type="NCBIfam" id="NF010480">
    <property type="entry name" value="PRK13905.1"/>
    <property type="match status" value="1"/>
</dbReference>
<dbReference type="PANTHER" id="PTHR21071">
    <property type="entry name" value="UDP-N-ACETYLENOLPYRUVOYLGLUCOSAMINE REDUCTASE"/>
    <property type="match status" value="1"/>
</dbReference>
<dbReference type="PANTHER" id="PTHR21071:SF4">
    <property type="entry name" value="UDP-N-ACETYLENOLPYRUVOYLGLUCOSAMINE REDUCTASE"/>
    <property type="match status" value="1"/>
</dbReference>
<dbReference type="Pfam" id="PF01565">
    <property type="entry name" value="FAD_binding_4"/>
    <property type="match status" value="1"/>
</dbReference>
<dbReference type="Pfam" id="PF02873">
    <property type="entry name" value="MurB_C"/>
    <property type="match status" value="1"/>
</dbReference>
<dbReference type="SUPFAM" id="SSF56176">
    <property type="entry name" value="FAD-binding/transporter-associated domain-like"/>
    <property type="match status" value="1"/>
</dbReference>
<dbReference type="SUPFAM" id="SSF56194">
    <property type="entry name" value="Uridine diphospho-N-Acetylenolpyruvylglucosamine reductase, MurB, C-terminal domain"/>
    <property type="match status" value="1"/>
</dbReference>
<dbReference type="PROSITE" id="PS51387">
    <property type="entry name" value="FAD_PCMH"/>
    <property type="match status" value="1"/>
</dbReference>
<protein>
    <recommendedName>
        <fullName evidence="1">UDP-N-acetylenolpyruvoylglucosamine reductase</fullName>
        <ecNumber evidence="1">1.3.1.98</ecNumber>
    </recommendedName>
    <alternativeName>
        <fullName evidence="1">UDP-N-acetylmuramate dehydrogenase</fullName>
    </alternativeName>
</protein>
<name>MURB_NITMU</name>
<feature type="chain" id="PRO_0000332482" description="UDP-N-acetylenolpyruvoylglucosamine reductase">
    <location>
        <begin position="1"/>
        <end position="347"/>
    </location>
</feature>
<feature type="domain" description="FAD-binding PCMH-type" evidence="1">
    <location>
        <begin position="33"/>
        <end position="221"/>
    </location>
</feature>
<feature type="active site" evidence="1">
    <location>
        <position position="180"/>
    </location>
</feature>
<feature type="active site" description="Proton donor" evidence="1">
    <location>
        <position position="250"/>
    </location>
</feature>
<feature type="active site" evidence="1">
    <location>
        <position position="320"/>
    </location>
</feature>
<gene>
    <name evidence="1" type="primary">murB</name>
    <name type="ordered locus">Nmul_A2492</name>
</gene>
<organism>
    <name type="scientific">Nitrosospira multiformis (strain ATCC 25196 / NCIMB 11849 / C 71)</name>
    <dbReference type="NCBI Taxonomy" id="323848"/>
    <lineage>
        <taxon>Bacteria</taxon>
        <taxon>Pseudomonadati</taxon>
        <taxon>Pseudomonadota</taxon>
        <taxon>Betaproteobacteria</taxon>
        <taxon>Nitrosomonadales</taxon>
        <taxon>Nitrosomonadaceae</taxon>
        <taxon>Nitrosospira</taxon>
    </lineage>
</organism>
<accession>Q2Y640</accession>
<proteinExistence type="inferred from homology"/>
<sequence>MDMSEINFSLDYAGVRGELRHDQPMKNYTSWRAGGSAERIYLPGDLPDLAAFLRGLPWNEPVYVMGLGSNLLVRDGGVRGSVVVLHARLNGLQLESDMGQMLIYAGAGVACAKVARFAALQGLGGAEFLAGIPGTVGGALAMNAGCYGTETWDIVSSVQTIDRLGILRRRPPGNYEIGYRHVALKAEKSSGSQKMGARENAPDDSLTDEWFSGAWFALPRDHAAAVRQKIKELLARRIHTQPLNLPNAGSVFRNPENDKAARLIESCGLKEFRIGGAMVSPRHANFIVNTGGATASDIEAVIAAVRETVKKQTGVELKQEVRIIGTPARPELHVSRTAYRKDGGYGG</sequence>
<keyword id="KW-0131">Cell cycle</keyword>
<keyword id="KW-0132">Cell division</keyword>
<keyword id="KW-0133">Cell shape</keyword>
<keyword id="KW-0961">Cell wall biogenesis/degradation</keyword>
<keyword id="KW-0963">Cytoplasm</keyword>
<keyword id="KW-0274">FAD</keyword>
<keyword id="KW-0285">Flavoprotein</keyword>
<keyword id="KW-0521">NADP</keyword>
<keyword id="KW-0560">Oxidoreductase</keyword>
<keyword id="KW-0573">Peptidoglycan synthesis</keyword>
<keyword id="KW-1185">Reference proteome</keyword>
<comment type="function">
    <text evidence="1">Cell wall formation.</text>
</comment>
<comment type="catalytic activity">
    <reaction evidence="1">
        <text>UDP-N-acetyl-alpha-D-muramate + NADP(+) = UDP-N-acetyl-3-O-(1-carboxyvinyl)-alpha-D-glucosamine + NADPH + H(+)</text>
        <dbReference type="Rhea" id="RHEA:12248"/>
        <dbReference type="ChEBI" id="CHEBI:15378"/>
        <dbReference type="ChEBI" id="CHEBI:57783"/>
        <dbReference type="ChEBI" id="CHEBI:58349"/>
        <dbReference type="ChEBI" id="CHEBI:68483"/>
        <dbReference type="ChEBI" id="CHEBI:70757"/>
        <dbReference type="EC" id="1.3.1.98"/>
    </reaction>
</comment>
<comment type="cofactor">
    <cofactor evidence="1">
        <name>FAD</name>
        <dbReference type="ChEBI" id="CHEBI:57692"/>
    </cofactor>
</comment>
<comment type="pathway">
    <text evidence="1">Cell wall biogenesis; peptidoglycan biosynthesis.</text>
</comment>
<comment type="subcellular location">
    <subcellularLocation>
        <location evidence="1">Cytoplasm</location>
    </subcellularLocation>
</comment>
<comment type="similarity">
    <text evidence="1">Belongs to the MurB family.</text>
</comment>